<gene>
    <name type="primary">esr2</name>
    <name type="synonym">nr3a2</name>
</gene>
<proteinExistence type="evidence at transcript level"/>
<sequence>MSSSLSPTLQTVNGMDQDEPLPLFPSHYPTALGVDRGTVCIPSPYADNGHAEMSFCGPSAPENPAIAPPLSPSLFWSSHNPHAMPALPLHCPPALPYSEPHIHTAWVDTKPHTSGRHSSFLSRPKLFGKRPEDGDGDEALDDDDPSSSSSGAVVKRDMHFCVVCHDYASGYHYGVWSCEGCKAFFKRSIQGHNDYICPATNQCTIDKNRRKSCQACRLRKCYEMGMMKCGARRERCGYRASRRTAPMRDGSARPVGVRGQSQRLPHTPLHVSLSIPVSRASAESGFSGLSPEQLVYCILEAEPPQIYLKQQMKKPYTESTVMMSLTQLADKELVLMISWAKKIPGFVELSLAHQVQLLECCWLEVLMLGLMWRSIDHPGKLIFSLDLKLNRDEGNCVEGIMEIFDMLLAGSSRFRELKLQKEEYVCLKALILLNSSMYMTSSACEKDLESRTKLLRLLDAVTDALVWAISRTGLSTQQQSARLAHLLMLLSHIRHLSNKGMEHLSSMKRKNVVLLYDLLLEMLDANMAQSRHVSTSVCTDPVTPATSPNTPLPPQLHSPVAHHVTQVNESQCSQE</sequence>
<organism>
    <name type="scientific">Ictalurus punctatus</name>
    <name type="common">Channel catfish</name>
    <name type="synonym">Silurus punctatus</name>
    <dbReference type="NCBI Taxonomy" id="7998"/>
    <lineage>
        <taxon>Eukaryota</taxon>
        <taxon>Metazoa</taxon>
        <taxon>Chordata</taxon>
        <taxon>Craniata</taxon>
        <taxon>Vertebrata</taxon>
        <taxon>Euteleostomi</taxon>
        <taxon>Actinopterygii</taxon>
        <taxon>Neopterygii</taxon>
        <taxon>Teleostei</taxon>
        <taxon>Ostariophysi</taxon>
        <taxon>Siluriformes</taxon>
        <taxon>Ictaluridae</taxon>
        <taxon>Ictalurus</taxon>
    </lineage>
</organism>
<name>ESR2_ICTPU</name>
<keyword id="KW-0238">DNA-binding</keyword>
<keyword id="KW-0446">Lipid-binding</keyword>
<keyword id="KW-0479">Metal-binding</keyword>
<keyword id="KW-0539">Nucleus</keyword>
<keyword id="KW-0675">Receptor</keyword>
<keyword id="KW-0754">Steroid-binding</keyword>
<keyword id="KW-0804">Transcription</keyword>
<keyword id="KW-0805">Transcription regulation</keyword>
<keyword id="KW-0862">Zinc</keyword>
<keyword id="KW-0863">Zinc-finger</keyword>
<feature type="chain" id="PRO_0000053654" description="Estrogen receptor beta">
    <location>
        <begin position="1"/>
        <end position="575"/>
    </location>
</feature>
<feature type="domain" description="NR LBD" evidence="4">
    <location>
        <begin position="290"/>
        <end position="526"/>
    </location>
</feature>
<feature type="DNA-binding region" description="Nuclear receptor" evidence="3">
    <location>
        <begin position="161"/>
        <end position="226"/>
    </location>
</feature>
<feature type="zinc finger region" description="NR C4-type" evidence="3">
    <location>
        <begin position="161"/>
        <end position="181"/>
    </location>
</feature>
<feature type="zinc finger region" description="NR C4-type" evidence="3">
    <location>
        <begin position="197"/>
        <end position="221"/>
    </location>
</feature>
<feature type="region of interest" description="Modulating">
    <location>
        <begin position="1"/>
        <end position="160"/>
    </location>
</feature>
<feature type="region of interest" description="Disordered" evidence="5">
    <location>
        <begin position="108"/>
        <end position="151"/>
    </location>
</feature>
<feature type="region of interest" description="Disordered" evidence="5">
    <location>
        <begin position="537"/>
        <end position="557"/>
    </location>
</feature>
<feature type="compositionally biased region" description="Acidic residues" evidence="5">
    <location>
        <begin position="134"/>
        <end position="145"/>
    </location>
</feature>
<feature type="compositionally biased region" description="Polar residues" evidence="5">
    <location>
        <begin position="537"/>
        <end position="549"/>
    </location>
</feature>
<comment type="function">
    <text evidence="2">Binds estrogens with an affinity similar to that of ER-alpha, and activates expression of reporter genes containing estrogen response elements (ERE) in an estrogen-dependent manner.</text>
</comment>
<comment type="subunit">
    <text evidence="1">Binds DNA as a homodimer. Can form a heterodimer with ER-alpha (By similarity).</text>
</comment>
<comment type="subcellular location">
    <subcellularLocation>
        <location>Nucleus</location>
    </subcellularLocation>
</comment>
<comment type="tissue specificity">
    <text>Ovary and testis.</text>
</comment>
<comment type="domain">
    <text>Composed of three domains: a modulating N-terminal domain, a DNA-binding domain and a C-terminal ligand-binding domain.</text>
</comment>
<comment type="similarity">
    <text evidence="6">Belongs to the nuclear hormone receptor family. NR3 subfamily.</text>
</comment>
<reference key="1">
    <citation type="journal article" date="2000" name="Gen. Comp. Endocrinol.">
        <title>Phylogenetic sequence analysis, recombinant expression, and tissue distribution of a channel catfish estrogen receptor beta.</title>
        <authorList>
            <person name="Xia Z."/>
            <person name="Gale W.L."/>
            <person name="Chang X."/>
            <person name="Langenau D."/>
            <person name="Patino R."/>
            <person name="Maule A.G."/>
            <person name="Densmore L.D."/>
        </authorList>
    </citation>
    <scope>NUCLEOTIDE SEQUENCE [MRNA]</scope>
    <source>
        <tissue>Ovary</tissue>
    </source>
</reference>
<accession>Q9IAK1</accession>
<protein>
    <recommendedName>
        <fullName>Estrogen receptor beta</fullName>
        <shortName>ER-beta</shortName>
    </recommendedName>
    <alternativeName>
        <fullName>Nuclear receptor subfamily 3 group A member 2</fullName>
    </alternativeName>
</protein>
<dbReference type="EMBL" id="AF185568">
    <property type="protein sequence ID" value="AAF63157.1"/>
    <property type="molecule type" value="mRNA"/>
</dbReference>
<dbReference type="RefSeq" id="NP_001187012.1">
    <property type="nucleotide sequence ID" value="NM_001200083.1"/>
</dbReference>
<dbReference type="SMR" id="Q9IAK1"/>
<dbReference type="STRING" id="7998.ENSIPUP00000034555"/>
<dbReference type="GeneID" id="100304489"/>
<dbReference type="KEGG" id="ipu:100304489"/>
<dbReference type="CTD" id="317733"/>
<dbReference type="OrthoDB" id="5799427at2759"/>
<dbReference type="SABIO-RK" id="Q9IAK1"/>
<dbReference type="Proteomes" id="UP000221080">
    <property type="component" value="Chromosome 3"/>
</dbReference>
<dbReference type="GO" id="GO:0016020">
    <property type="term" value="C:membrane"/>
    <property type="evidence" value="ECO:0000314"/>
    <property type="project" value="AgBase"/>
</dbReference>
<dbReference type="GO" id="GO:0005634">
    <property type="term" value="C:nucleus"/>
    <property type="evidence" value="ECO:0007669"/>
    <property type="project" value="UniProtKB-SubCell"/>
</dbReference>
<dbReference type="GO" id="GO:0003677">
    <property type="term" value="F:DNA binding"/>
    <property type="evidence" value="ECO:0000250"/>
    <property type="project" value="AgBase"/>
</dbReference>
<dbReference type="GO" id="GO:0042562">
    <property type="term" value="F:hormone binding"/>
    <property type="evidence" value="ECO:0000314"/>
    <property type="project" value="AgBase"/>
</dbReference>
<dbReference type="GO" id="GO:0030284">
    <property type="term" value="F:nuclear estrogen receptor activity"/>
    <property type="evidence" value="ECO:0000314"/>
    <property type="project" value="AgBase"/>
</dbReference>
<dbReference type="GO" id="GO:0004879">
    <property type="term" value="F:nuclear receptor activity"/>
    <property type="evidence" value="ECO:0000314"/>
    <property type="project" value="AgBase"/>
</dbReference>
<dbReference type="GO" id="GO:0017046">
    <property type="term" value="F:peptide hormone binding"/>
    <property type="evidence" value="ECO:0000314"/>
    <property type="project" value="AgBase"/>
</dbReference>
<dbReference type="GO" id="GO:0043565">
    <property type="term" value="F:sequence-specific DNA binding"/>
    <property type="evidence" value="ECO:0007669"/>
    <property type="project" value="InterPro"/>
</dbReference>
<dbReference type="GO" id="GO:1990239">
    <property type="term" value="F:steroid hormone binding"/>
    <property type="evidence" value="ECO:0000314"/>
    <property type="project" value="AgBase"/>
</dbReference>
<dbReference type="GO" id="GO:0008270">
    <property type="term" value="F:zinc ion binding"/>
    <property type="evidence" value="ECO:0007669"/>
    <property type="project" value="UniProtKB-KW"/>
</dbReference>
<dbReference type="GO" id="GO:0071392">
    <property type="term" value="P:cellular response to estradiol stimulus"/>
    <property type="evidence" value="ECO:0007669"/>
    <property type="project" value="InterPro"/>
</dbReference>
<dbReference type="GO" id="GO:0030520">
    <property type="term" value="P:estrogen receptor signaling pathway"/>
    <property type="evidence" value="ECO:0007669"/>
    <property type="project" value="InterPro"/>
</dbReference>
<dbReference type="GO" id="GO:0008406">
    <property type="term" value="P:gonad development"/>
    <property type="evidence" value="ECO:0000304"/>
    <property type="project" value="AgBase"/>
</dbReference>
<dbReference type="GO" id="GO:0009410">
    <property type="term" value="P:response to xenobiotic stimulus"/>
    <property type="evidence" value="ECO:0000304"/>
    <property type="project" value="AgBase"/>
</dbReference>
<dbReference type="CDD" id="cd07171">
    <property type="entry name" value="NR_DBD_ER"/>
    <property type="match status" value="1"/>
</dbReference>
<dbReference type="CDD" id="cd06949">
    <property type="entry name" value="NR_LBD_ER"/>
    <property type="match status" value="1"/>
</dbReference>
<dbReference type="FunFam" id="1.10.565.10:FF:000010">
    <property type="entry name" value="Estrogen receptor"/>
    <property type="match status" value="1"/>
</dbReference>
<dbReference type="FunFam" id="3.30.50.10:FF:000014">
    <property type="entry name" value="Estrogen receptor beta"/>
    <property type="match status" value="1"/>
</dbReference>
<dbReference type="Gene3D" id="3.30.50.10">
    <property type="entry name" value="Erythroid Transcription Factor GATA-1, subunit A"/>
    <property type="match status" value="1"/>
</dbReference>
<dbReference type="Gene3D" id="1.10.565.10">
    <property type="entry name" value="Retinoid X Receptor"/>
    <property type="match status" value="1"/>
</dbReference>
<dbReference type="InterPro" id="IPR021064">
    <property type="entry name" value="ER-beta-like_N"/>
</dbReference>
<dbReference type="InterPro" id="IPR028355">
    <property type="entry name" value="ER-beta/gamma"/>
</dbReference>
<dbReference type="InterPro" id="IPR024178">
    <property type="entry name" value="Est_rcpt/est-rel_rcp"/>
</dbReference>
<dbReference type="InterPro" id="IPR035500">
    <property type="entry name" value="NHR-like_dom_sf"/>
</dbReference>
<dbReference type="InterPro" id="IPR000536">
    <property type="entry name" value="Nucl_hrmn_rcpt_lig-bd"/>
</dbReference>
<dbReference type="InterPro" id="IPR050200">
    <property type="entry name" value="Nuclear_hormone_rcpt_NR3"/>
</dbReference>
<dbReference type="InterPro" id="IPR001723">
    <property type="entry name" value="Nuclear_hrmn_rcpt"/>
</dbReference>
<dbReference type="InterPro" id="IPR001628">
    <property type="entry name" value="Znf_hrmn_rcpt"/>
</dbReference>
<dbReference type="InterPro" id="IPR013088">
    <property type="entry name" value="Znf_NHR/GATA"/>
</dbReference>
<dbReference type="PANTHER" id="PTHR48092">
    <property type="entry name" value="KNIRPS-RELATED PROTEIN-RELATED"/>
    <property type="match status" value="1"/>
</dbReference>
<dbReference type="Pfam" id="PF12497">
    <property type="entry name" value="ERbeta_N"/>
    <property type="match status" value="1"/>
</dbReference>
<dbReference type="Pfam" id="PF00104">
    <property type="entry name" value="Hormone_recep"/>
    <property type="match status" value="1"/>
</dbReference>
<dbReference type="Pfam" id="PF00105">
    <property type="entry name" value="zf-C4"/>
    <property type="match status" value="1"/>
</dbReference>
<dbReference type="PIRSF" id="PIRSF500102">
    <property type="entry name" value="ER-b"/>
    <property type="match status" value="1"/>
</dbReference>
<dbReference type="PIRSF" id="PIRSF002527">
    <property type="entry name" value="ER-like_NR"/>
    <property type="match status" value="1"/>
</dbReference>
<dbReference type="PRINTS" id="PR00398">
    <property type="entry name" value="STRDHORMONER"/>
</dbReference>
<dbReference type="PRINTS" id="PR00047">
    <property type="entry name" value="STROIDFINGER"/>
</dbReference>
<dbReference type="SMART" id="SM00430">
    <property type="entry name" value="HOLI"/>
    <property type="match status" value="1"/>
</dbReference>
<dbReference type="SMART" id="SM00399">
    <property type="entry name" value="ZnF_C4"/>
    <property type="match status" value="1"/>
</dbReference>
<dbReference type="SUPFAM" id="SSF57716">
    <property type="entry name" value="Glucocorticoid receptor-like (DNA-binding domain)"/>
    <property type="match status" value="1"/>
</dbReference>
<dbReference type="SUPFAM" id="SSF48508">
    <property type="entry name" value="Nuclear receptor ligand-binding domain"/>
    <property type="match status" value="1"/>
</dbReference>
<dbReference type="PROSITE" id="PS51843">
    <property type="entry name" value="NR_LBD"/>
    <property type="match status" value="1"/>
</dbReference>
<dbReference type="PROSITE" id="PS00031">
    <property type="entry name" value="NUCLEAR_REC_DBD_1"/>
    <property type="match status" value="1"/>
</dbReference>
<dbReference type="PROSITE" id="PS51030">
    <property type="entry name" value="NUCLEAR_REC_DBD_2"/>
    <property type="match status" value="1"/>
</dbReference>
<evidence type="ECO:0000250" key="1"/>
<evidence type="ECO:0000250" key="2">
    <source>
        <dbReference type="UniProtKB" id="Q92731"/>
    </source>
</evidence>
<evidence type="ECO:0000255" key="3">
    <source>
        <dbReference type="PROSITE-ProRule" id="PRU00407"/>
    </source>
</evidence>
<evidence type="ECO:0000255" key="4">
    <source>
        <dbReference type="PROSITE-ProRule" id="PRU01189"/>
    </source>
</evidence>
<evidence type="ECO:0000256" key="5">
    <source>
        <dbReference type="SAM" id="MobiDB-lite"/>
    </source>
</evidence>
<evidence type="ECO:0000305" key="6"/>